<comment type="function">
    <text evidence="1">This protein binds to 23S rRNA in the presence of protein L20.</text>
</comment>
<comment type="subunit">
    <text evidence="1">Part of the 50S ribosomal subunit. Contacts protein L20.</text>
</comment>
<comment type="similarity">
    <text evidence="1">Belongs to the bacterial ribosomal protein bL21 family.</text>
</comment>
<name>RL21_AZOC5</name>
<sequence>MFAVIKTGGKQYRVATNDVITVEKLEAAAGESVTFPVLLLSGETTLVGAPLVEGASVTAEVVEQTRGEKVIAFKKRRRQNSRRKRGHRQDLTVVRITEIATA</sequence>
<proteinExistence type="inferred from homology"/>
<dbReference type="EMBL" id="AP009384">
    <property type="protein sequence ID" value="BAF90092.1"/>
    <property type="molecule type" value="Genomic_DNA"/>
</dbReference>
<dbReference type="RefSeq" id="WP_012172614.1">
    <property type="nucleotide sequence ID" value="NC_009937.1"/>
</dbReference>
<dbReference type="SMR" id="A8HRT9"/>
<dbReference type="STRING" id="438753.AZC_4094"/>
<dbReference type="KEGG" id="azc:AZC_4094"/>
<dbReference type="eggNOG" id="COG0261">
    <property type="taxonomic scope" value="Bacteria"/>
</dbReference>
<dbReference type="HOGENOM" id="CLU_061463_3_2_5"/>
<dbReference type="Proteomes" id="UP000000270">
    <property type="component" value="Chromosome"/>
</dbReference>
<dbReference type="GO" id="GO:0005737">
    <property type="term" value="C:cytoplasm"/>
    <property type="evidence" value="ECO:0007669"/>
    <property type="project" value="UniProtKB-ARBA"/>
</dbReference>
<dbReference type="GO" id="GO:1990904">
    <property type="term" value="C:ribonucleoprotein complex"/>
    <property type="evidence" value="ECO:0007669"/>
    <property type="project" value="UniProtKB-KW"/>
</dbReference>
<dbReference type="GO" id="GO:0005840">
    <property type="term" value="C:ribosome"/>
    <property type="evidence" value="ECO:0007669"/>
    <property type="project" value="UniProtKB-KW"/>
</dbReference>
<dbReference type="GO" id="GO:0019843">
    <property type="term" value="F:rRNA binding"/>
    <property type="evidence" value="ECO:0007669"/>
    <property type="project" value="UniProtKB-UniRule"/>
</dbReference>
<dbReference type="GO" id="GO:0003735">
    <property type="term" value="F:structural constituent of ribosome"/>
    <property type="evidence" value="ECO:0007669"/>
    <property type="project" value="InterPro"/>
</dbReference>
<dbReference type="GO" id="GO:0006412">
    <property type="term" value="P:translation"/>
    <property type="evidence" value="ECO:0007669"/>
    <property type="project" value="UniProtKB-UniRule"/>
</dbReference>
<dbReference type="HAMAP" id="MF_01363">
    <property type="entry name" value="Ribosomal_bL21"/>
    <property type="match status" value="1"/>
</dbReference>
<dbReference type="InterPro" id="IPR028909">
    <property type="entry name" value="bL21-like"/>
</dbReference>
<dbReference type="InterPro" id="IPR036164">
    <property type="entry name" value="bL21-like_sf"/>
</dbReference>
<dbReference type="InterPro" id="IPR001787">
    <property type="entry name" value="Ribosomal_bL21"/>
</dbReference>
<dbReference type="NCBIfam" id="TIGR00061">
    <property type="entry name" value="L21"/>
    <property type="match status" value="1"/>
</dbReference>
<dbReference type="PANTHER" id="PTHR21349">
    <property type="entry name" value="50S RIBOSOMAL PROTEIN L21"/>
    <property type="match status" value="1"/>
</dbReference>
<dbReference type="PANTHER" id="PTHR21349:SF0">
    <property type="entry name" value="LARGE RIBOSOMAL SUBUNIT PROTEIN BL21M"/>
    <property type="match status" value="1"/>
</dbReference>
<dbReference type="Pfam" id="PF00829">
    <property type="entry name" value="Ribosomal_L21p"/>
    <property type="match status" value="1"/>
</dbReference>
<dbReference type="SUPFAM" id="SSF141091">
    <property type="entry name" value="L21p-like"/>
    <property type="match status" value="1"/>
</dbReference>
<accession>A8HRT9</accession>
<organism>
    <name type="scientific">Azorhizobium caulinodans (strain ATCC 43989 / DSM 5975 / JCM 20966 / LMG 6465 / NBRC 14845 / NCIMB 13405 / ORS 571)</name>
    <dbReference type="NCBI Taxonomy" id="438753"/>
    <lineage>
        <taxon>Bacteria</taxon>
        <taxon>Pseudomonadati</taxon>
        <taxon>Pseudomonadota</taxon>
        <taxon>Alphaproteobacteria</taxon>
        <taxon>Hyphomicrobiales</taxon>
        <taxon>Xanthobacteraceae</taxon>
        <taxon>Azorhizobium</taxon>
    </lineage>
</organism>
<keyword id="KW-1185">Reference proteome</keyword>
<keyword id="KW-0687">Ribonucleoprotein</keyword>
<keyword id="KW-0689">Ribosomal protein</keyword>
<keyword id="KW-0694">RNA-binding</keyword>
<keyword id="KW-0699">rRNA-binding</keyword>
<gene>
    <name evidence="1" type="primary">rplU</name>
    <name type="ordered locus">AZC_4094</name>
</gene>
<reference key="1">
    <citation type="submission" date="2007-04" db="EMBL/GenBank/DDBJ databases">
        <title>Complete genome sequence of the nitrogen-fixing bacterium Azorhizobium caulinodans ORS571.</title>
        <authorList>
            <person name="Lee K.B."/>
            <person name="Backer P.D."/>
            <person name="Aono T."/>
            <person name="Liu C.T."/>
            <person name="Suzuki S."/>
            <person name="Suzuki T."/>
            <person name="Kaneko T."/>
            <person name="Yamada M."/>
            <person name="Tabata S."/>
            <person name="Kupfer D.M."/>
            <person name="Najar F.Z."/>
            <person name="Wiley G.B."/>
            <person name="Roe B."/>
            <person name="Binnewies T."/>
            <person name="Ussery D."/>
            <person name="Vereecke D."/>
            <person name="Gevers D."/>
            <person name="Holsters M."/>
            <person name="Oyaizu H."/>
        </authorList>
    </citation>
    <scope>NUCLEOTIDE SEQUENCE [LARGE SCALE GENOMIC DNA]</scope>
    <source>
        <strain>ATCC 43989 / DSM 5975 / JCM 20966 / LMG 6465 / NBRC 14845 / NCIMB 13405 / ORS 571</strain>
    </source>
</reference>
<protein>
    <recommendedName>
        <fullName evidence="1">Large ribosomal subunit protein bL21</fullName>
    </recommendedName>
    <alternativeName>
        <fullName evidence="2">50S ribosomal protein L21</fullName>
    </alternativeName>
</protein>
<feature type="chain" id="PRO_1000073383" description="Large ribosomal subunit protein bL21">
    <location>
        <begin position="1"/>
        <end position="102"/>
    </location>
</feature>
<evidence type="ECO:0000255" key="1">
    <source>
        <dbReference type="HAMAP-Rule" id="MF_01363"/>
    </source>
</evidence>
<evidence type="ECO:0000305" key="2"/>